<sequence length="717" mass="80913">MGDLPPYPERPAQQPPGRRTSQASQRRHSRDQAQALAADPEERQQIPPDAQRNAPGWSQRGSLSQQENLLMPQVFQAEEARLGGMEYPSVNTGFPSEFQPQPYSDESRMQVAELTTSLMLQRLQQGQSSLFQQLDPTFQEPPVNPLGQFNLYQTDQFSEGAQHGPYIRDDPALQFLPSELGFPHYSAQVPEPEPLELAVQNAKAYLLQTSINCDLSLYEHLVNLLTKILNQRPEDPLSVLESLNRTTQWEWFHPKLDTLRDDPEMQPTYKMAEKQKALFTRSGGGTEGEQEMEEEVGETPVPNIMETAFYFEQAGVGLSSDESFRIFLAMKQLVEQQPIHTCRFWGKILGIKRSYLVAEVEFREGEEEAEEEEVEEMTEGGEVMEAHGEEEGEEDEEKAVDIVPKSVWKPPPVIPKEESRSGANKYLYFVCNEPGLPWTRLPHVTPAQIVNARKIKKFFTGYLDTPVVSYPPFPGNEANYLRAQIARISAATQVSPLGFYQFSEEEGDEEEEGGAGRDSYEENPDFEGIPVLELVDSMANWVHHTQHILPQGRCTWVNPLQKTEEEEDLGEEEEKADEGPEEVEQEVGPPLLTPLSEDAEIMHLAPWTTRLSCSLCPQYSVAVVRSNLWPGAYAYASGKKFENIYIGWGHKYSPESFNPALPAPIQQEYPSGPEIMEMSDPTVEEEQALKAAQEQALGATEEEEEGEEEEEGEETDD</sequence>
<feature type="chain" id="PRO_0000312760" description="Radial spoke head protein 6 homolog A">
    <location>
        <begin position="1"/>
        <end position="717"/>
    </location>
</feature>
<feature type="region of interest" description="Disordered" evidence="2">
    <location>
        <begin position="1"/>
        <end position="65"/>
    </location>
</feature>
<feature type="region of interest" description="Disordered" evidence="2">
    <location>
        <begin position="503"/>
        <end position="523"/>
    </location>
</feature>
<feature type="region of interest" description="Disordered" evidence="2">
    <location>
        <begin position="563"/>
        <end position="588"/>
    </location>
</feature>
<feature type="region of interest" description="Disordered" evidence="2">
    <location>
        <begin position="672"/>
        <end position="717"/>
    </location>
</feature>
<feature type="compositionally biased region" description="Acidic residues" evidence="2">
    <location>
        <begin position="503"/>
        <end position="513"/>
    </location>
</feature>
<feature type="compositionally biased region" description="Acidic residues" evidence="2">
    <location>
        <begin position="564"/>
        <end position="585"/>
    </location>
</feature>
<feature type="compositionally biased region" description="Acidic residues" evidence="2">
    <location>
        <begin position="700"/>
        <end position="717"/>
    </location>
</feature>
<feature type="sequence variant" id="VAR_037560" description="In dbSNP:rs12459916.">
    <original>A</original>
    <variation>V</variation>
    <location>
        <position position="50"/>
    </location>
</feature>
<feature type="sequence conflict" description="In Ref. 2; BAD97067." evidence="3" ref="2">
    <original>P</original>
    <variation>S</variation>
    <location>
        <position position="55"/>
    </location>
</feature>
<feature type="sequence conflict" description="In Ref. 2; BAD97067." evidence="3" ref="2">
    <original>Q</original>
    <variation>R</variation>
    <location>
        <position position="139"/>
    </location>
</feature>
<proteinExistence type="evidence at protein level"/>
<name>RSH6A_HUMAN</name>
<gene>
    <name evidence="4" type="primary">RSPH6A</name>
    <name type="synonym">RSHL1</name>
</gene>
<organism>
    <name type="scientific">Homo sapiens</name>
    <name type="common">Human</name>
    <dbReference type="NCBI Taxonomy" id="9606"/>
    <lineage>
        <taxon>Eukaryota</taxon>
        <taxon>Metazoa</taxon>
        <taxon>Chordata</taxon>
        <taxon>Craniata</taxon>
        <taxon>Vertebrata</taxon>
        <taxon>Euteleostomi</taxon>
        <taxon>Mammalia</taxon>
        <taxon>Eutheria</taxon>
        <taxon>Euarchontoglires</taxon>
        <taxon>Primates</taxon>
        <taxon>Haplorrhini</taxon>
        <taxon>Catarrhini</taxon>
        <taxon>Hominidae</taxon>
        <taxon>Homo</taxon>
    </lineage>
</organism>
<dbReference type="EMBL" id="AL136761">
    <property type="protein sequence ID" value="CAB66695.1"/>
    <property type="molecule type" value="mRNA"/>
</dbReference>
<dbReference type="EMBL" id="AK223347">
    <property type="protein sequence ID" value="BAD97067.1"/>
    <property type="molecule type" value="mRNA"/>
</dbReference>
<dbReference type="EMBL" id="CH471126">
    <property type="protein sequence ID" value="EAW57388.1"/>
    <property type="molecule type" value="Genomic_DNA"/>
</dbReference>
<dbReference type="EMBL" id="BC057785">
    <property type="protein sequence ID" value="AAH57785.1"/>
    <property type="molecule type" value="mRNA"/>
</dbReference>
<dbReference type="CCDS" id="CCDS12675.1"/>
<dbReference type="RefSeq" id="NP_110412.1">
    <property type="nucleotide sequence ID" value="NM_030785.4"/>
</dbReference>
<dbReference type="SMR" id="Q9H0K4"/>
<dbReference type="BioGRID" id="123501">
    <property type="interactions" value="35"/>
</dbReference>
<dbReference type="ComplexPortal" id="CPX-8164">
    <property type="entry name" value="Radial spoke complex, flagellar variant"/>
</dbReference>
<dbReference type="FunCoup" id="Q9H0K4">
    <property type="interactions" value="75"/>
</dbReference>
<dbReference type="IntAct" id="Q9H0K4">
    <property type="interactions" value="32"/>
</dbReference>
<dbReference type="STRING" id="9606.ENSP00000221538"/>
<dbReference type="iPTMnet" id="Q9H0K4"/>
<dbReference type="PhosphoSitePlus" id="Q9H0K4"/>
<dbReference type="BioMuta" id="RSPH6A"/>
<dbReference type="DMDM" id="74717992"/>
<dbReference type="MassIVE" id="Q9H0K4"/>
<dbReference type="PaxDb" id="9606-ENSP00000221538"/>
<dbReference type="PeptideAtlas" id="Q9H0K4"/>
<dbReference type="ProteomicsDB" id="80291"/>
<dbReference type="Antibodypedia" id="49254">
    <property type="antibodies" value="33 antibodies from 11 providers"/>
</dbReference>
<dbReference type="DNASU" id="81492"/>
<dbReference type="Ensembl" id="ENST00000221538.8">
    <property type="protein sequence ID" value="ENSP00000221538.2"/>
    <property type="gene ID" value="ENSG00000104941.8"/>
</dbReference>
<dbReference type="GeneID" id="81492"/>
<dbReference type="KEGG" id="hsa:81492"/>
<dbReference type="MANE-Select" id="ENST00000221538.8">
    <property type="protein sequence ID" value="ENSP00000221538.2"/>
    <property type="RefSeq nucleotide sequence ID" value="NM_030785.4"/>
    <property type="RefSeq protein sequence ID" value="NP_110412.1"/>
</dbReference>
<dbReference type="UCSC" id="uc002pdm.4">
    <property type="organism name" value="human"/>
</dbReference>
<dbReference type="AGR" id="HGNC:14241"/>
<dbReference type="CTD" id="81492"/>
<dbReference type="DisGeNET" id="81492"/>
<dbReference type="GeneCards" id="RSPH6A"/>
<dbReference type="HGNC" id="HGNC:14241">
    <property type="gene designation" value="RSPH6A"/>
</dbReference>
<dbReference type="HPA" id="ENSG00000104941">
    <property type="expression patterns" value="Tissue enriched (testis)"/>
</dbReference>
<dbReference type="MIM" id="607548">
    <property type="type" value="gene"/>
</dbReference>
<dbReference type="neXtProt" id="NX_Q9H0K4"/>
<dbReference type="OpenTargets" id="ENSG00000104941"/>
<dbReference type="PharmGKB" id="PA34873"/>
<dbReference type="VEuPathDB" id="HostDB:ENSG00000104941"/>
<dbReference type="eggNOG" id="ENOG502QSU4">
    <property type="taxonomic scope" value="Eukaryota"/>
</dbReference>
<dbReference type="GeneTree" id="ENSGT00500000044869"/>
<dbReference type="InParanoid" id="Q9H0K4"/>
<dbReference type="OMA" id="CVYFGNG"/>
<dbReference type="OrthoDB" id="272202at2759"/>
<dbReference type="PAN-GO" id="Q9H0K4">
    <property type="GO annotations" value="3 GO annotations based on evolutionary models"/>
</dbReference>
<dbReference type="PhylomeDB" id="Q9H0K4"/>
<dbReference type="TreeFam" id="TF324531"/>
<dbReference type="PathwayCommons" id="Q9H0K4"/>
<dbReference type="SignaLink" id="Q9H0K4"/>
<dbReference type="BioGRID-ORCS" id="81492">
    <property type="hits" value="37 hits in 1143 CRISPR screens"/>
</dbReference>
<dbReference type="ChiTaRS" id="RSPH6A">
    <property type="organism name" value="human"/>
</dbReference>
<dbReference type="GeneWiki" id="RSPH6A"/>
<dbReference type="GenomeRNAi" id="81492"/>
<dbReference type="Pharos" id="Q9H0K4">
    <property type="development level" value="Tdark"/>
</dbReference>
<dbReference type="PRO" id="PR:Q9H0K4"/>
<dbReference type="Proteomes" id="UP000005640">
    <property type="component" value="Chromosome 19"/>
</dbReference>
<dbReference type="RNAct" id="Q9H0K4">
    <property type="molecule type" value="protein"/>
</dbReference>
<dbReference type="Bgee" id="ENSG00000104941">
    <property type="expression patterns" value="Expressed in left testis and 27 other cell types or tissues"/>
</dbReference>
<dbReference type="ExpressionAtlas" id="Q9H0K4">
    <property type="expression patterns" value="baseline and differential"/>
</dbReference>
<dbReference type="GO" id="GO:0005930">
    <property type="term" value="C:axoneme"/>
    <property type="evidence" value="ECO:0000318"/>
    <property type="project" value="GO_Central"/>
</dbReference>
<dbReference type="GO" id="GO:0001535">
    <property type="term" value="C:radial spoke head"/>
    <property type="evidence" value="ECO:0000250"/>
    <property type="project" value="UniProtKB"/>
</dbReference>
<dbReference type="GO" id="GO:0036126">
    <property type="term" value="C:sperm flagellum"/>
    <property type="evidence" value="ECO:0000250"/>
    <property type="project" value="UniProtKB"/>
</dbReference>
<dbReference type="GO" id="GO:0035082">
    <property type="term" value="P:axoneme assembly"/>
    <property type="evidence" value="ECO:0000318"/>
    <property type="project" value="GO_Central"/>
</dbReference>
<dbReference type="GO" id="GO:0003341">
    <property type="term" value="P:cilium movement"/>
    <property type="evidence" value="ECO:0000318"/>
    <property type="project" value="GO_Central"/>
</dbReference>
<dbReference type="GO" id="GO:1905199">
    <property type="term" value="P:manchette disassembly"/>
    <property type="evidence" value="ECO:0000250"/>
    <property type="project" value="UniProtKB"/>
</dbReference>
<dbReference type="GO" id="GO:0120316">
    <property type="term" value="P:sperm flagellum assembly"/>
    <property type="evidence" value="ECO:0000250"/>
    <property type="project" value="UniProtKB"/>
</dbReference>
<dbReference type="CDD" id="cd22963">
    <property type="entry name" value="DD_CrRSP4-like"/>
    <property type="match status" value="1"/>
</dbReference>
<dbReference type="InterPro" id="IPR006802">
    <property type="entry name" value="Radial_spoke"/>
</dbReference>
<dbReference type="PANTHER" id="PTHR13159:SF1">
    <property type="entry name" value="RADIAL SPOKE HEAD PROTEIN 6 HOMOLOG A"/>
    <property type="match status" value="1"/>
</dbReference>
<dbReference type="PANTHER" id="PTHR13159">
    <property type="entry name" value="RADIAL SPOKEHEAD-RELATED"/>
    <property type="match status" value="1"/>
</dbReference>
<dbReference type="Pfam" id="PF04712">
    <property type="entry name" value="Radial_spoke"/>
    <property type="match status" value="1"/>
</dbReference>
<accession>Q9H0K4</accession>
<accession>Q53FE2</accession>
<accession>Q6PEZ9</accession>
<protein>
    <recommendedName>
        <fullName evidence="3">Radial spoke head protein 6 homolog A</fullName>
    </recommendedName>
    <alternativeName>
        <fullName>Radial spoke head-like protein 1</fullName>
    </alternativeName>
</protein>
<comment type="function">
    <text evidence="1">Functions as part of radial spoke complexes in the axoneme of sperm flagella that play an important part in motility. The triple radial spokes (RS1, RS2 and RS3) are required to modulate beating of the sperm flagellum.</text>
</comment>
<comment type="subunit">
    <text evidence="1">Component of the axonemal radial spoke 1 (RS1) and 2 (RS2) complexes, at least composed of spoke head proteins RSPH1, RSPH3, RSPH9 and the cilia-specific component RSPH4A or sperm-specific component RSPH6A, spoke stalk proteins RSPH14, DNAJB13, DYDC1, ROPN1L and NME5, and the RS1 complex-specific anchor protein IQUB. Interacts with RSPH1. Interacts with RSPH3B. Interacts with RSPH4A. Interacts with RSPH9. Interacts with RSPH10B.</text>
</comment>
<comment type="interaction">
    <interactant intactId="EBI-12169267">
        <id>Q9H0K4</id>
    </interactant>
    <interactant intactId="EBI-2798728">
        <id>P61968</id>
        <label>LMO4</label>
    </interactant>
    <organismsDiffer>false</organismsDiffer>
    <experiments>3</experiments>
</comment>
<comment type="interaction">
    <interactant intactId="EBI-12169267">
        <id>Q9H0K4</id>
    </interactant>
    <interactant intactId="EBI-8463848">
        <id>Q8NB12</id>
        <label>SMYD1</label>
    </interactant>
    <organismsDiffer>false</organismsDiffer>
    <experiments>3</experiments>
</comment>
<comment type="subcellular location">
    <subcellularLocation>
        <location evidence="1">Cytoplasm</location>
        <location evidence="1">Cytoskeleton</location>
        <location evidence="1">Flagellum axoneme</location>
    </subcellularLocation>
</comment>
<comment type="PTM">
    <text evidence="1">Phosphorylated by PKA. Phosphorylation increases in capacitated sperm.</text>
</comment>
<comment type="similarity">
    <text evidence="3">Belongs to the flagellar radial spoke RSP4/6 family.</text>
</comment>
<reference key="1">
    <citation type="journal article" date="2001" name="Genome Res.">
        <title>Towards a catalog of human genes and proteins: sequencing and analysis of 500 novel complete protein coding human cDNAs.</title>
        <authorList>
            <person name="Wiemann S."/>
            <person name="Weil B."/>
            <person name="Wellenreuther R."/>
            <person name="Gassenhuber J."/>
            <person name="Glassl S."/>
            <person name="Ansorge W."/>
            <person name="Boecher M."/>
            <person name="Bloecker H."/>
            <person name="Bauersachs S."/>
            <person name="Blum H."/>
            <person name="Lauber J."/>
            <person name="Duesterhoeft A."/>
            <person name="Beyer A."/>
            <person name="Koehrer K."/>
            <person name="Strack N."/>
            <person name="Mewes H.-W."/>
            <person name="Ottenwaelder B."/>
            <person name="Obermaier B."/>
            <person name="Tampe J."/>
            <person name="Heubner D."/>
            <person name="Wambutt R."/>
            <person name="Korn B."/>
            <person name="Klein M."/>
            <person name="Poustka A."/>
        </authorList>
    </citation>
    <scope>NUCLEOTIDE SEQUENCE [LARGE SCALE MRNA]</scope>
    <source>
        <tissue>Testis</tissue>
    </source>
</reference>
<reference key="2">
    <citation type="submission" date="2005-04" db="EMBL/GenBank/DDBJ databases">
        <authorList>
            <person name="Suzuki Y."/>
            <person name="Sugano S."/>
            <person name="Totoki Y."/>
            <person name="Toyoda A."/>
            <person name="Takeda T."/>
            <person name="Sakaki Y."/>
            <person name="Tanaka A."/>
            <person name="Yokoyama S."/>
        </authorList>
    </citation>
    <scope>NUCLEOTIDE SEQUENCE [LARGE SCALE MRNA]</scope>
    <source>
        <tissue>Testis</tissue>
    </source>
</reference>
<reference key="3">
    <citation type="submission" date="2005-07" db="EMBL/GenBank/DDBJ databases">
        <authorList>
            <person name="Mural R.J."/>
            <person name="Istrail S."/>
            <person name="Sutton G.G."/>
            <person name="Florea L."/>
            <person name="Halpern A.L."/>
            <person name="Mobarry C.M."/>
            <person name="Lippert R."/>
            <person name="Walenz B."/>
            <person name="Shatkay H."/>
            <person name="Dew I."/>
            <person name="Miller J.R."/>
            <person name="Flanigan M.J."/>
            <person name="Edwards N.J."/>
            <person name="Bolanos R."/>
            <person name="Fasulo D."/>
            <person name="Halldorsson B.V."/>
            <person name="Hannenhalli S."/>
            <person name="Turner R."/>
            <person name="Yooseph S."/>
            <person name="Lu F."/>
            <person name="Nusskern D.R."/>
            <person name="Shue B.C."/>
            <person name="Zheng X.H."/>
            <person name="Zhong F."/>
            <person name="Delcher A.L."/>
            <person name="Huson D.H."/>
            <person name="Kravitz S.A."/>
            <person name="Mouchard L."/>
            <person name="Reinert K."/>
            <person name="Remington K.A."/>
            <person name="Clark A.G."/>
            <person name="Waterman M.S."/>
            <person name="Eichler E.E."/>
            <person name="Adams M.D."/>
            <person name="Hunkapiller M.W."/>
            <person name="Myers E.W."/>
            <person name="Venter J.C."/>
        </authorList>
    </citation>
    <scope>NUCLEOTIDE SEQUENCE [LARGE SCALE GENOMIC DNA]</scope>
</reference>
<reference key="4">
    <citation type="journal article" date="2004" name="Genome Res.">
        <title>The status, quality, and expansion of the NIH full-length cDNA project: the Mammalian Gene Collection (MGC).</title>
        <authorList>
            <consortium name="The MGC Project Team"/>
        </authorList>
    </citation>
    <scope>NUCLEOTIDE SEQUENCE [LARGE SCALE MRNA] OF 2-717</scope>
    <source>
        <tissue>Testis</tissue>
    </source>
</reference>
<evidence type="ECO:0000250" key="1">
    <source>
        <dbReference type="UniProtKB" id="Q8CDR2"/>
    </source>
</evidence>
<evidence type="ECO:0000256" key="2">
    <source>
        <dbReference type="SAM" id="MobiDB-lite"/>
    </source>
</evidence>
<evidence type="ECO:0000305" key="3"/>
<evidence type="ECO:0000312" key="4">
    <source>
        <dbReference type="HGNC" id="HGNC:14241"/>
    </source>
</evidence>
<keyword id="KW-0966">Cell projection</keyword>
<keyword id="KW-0969">Cilium</keyword>
<keyword id="KW-0963">Cytoplasm</keyword>
<keyword id="KW-0206">Cytoskeleton</keyword>
<keyword id="KW-0282">Flagellum</keyword>
<keyword id="KW-1267">Proteomics identification</keyword>
<keyword id="KW-1185">Reference proteome</keyword>